<comment type="function">
    <text evidence="2">Increases DNTT terminal deoxynucleotidyltransferase activity (in vitro). Also acts as a transcriptional regulator, binding to the consensus sequence 5'-GNTGCATG-3' following an AT-tract. Associates with RAB20 promoter and positively regulates its transcription. Binds DNA and nucleosomes; may recruit HDAC1 complexes to nucleosomes or naked DNA.</text>
</comment>
<comment type="subunit">
    <text evidence="1 2">Monomer and homodimer. A minor proportion may form homotrimers. Interacts with ZNF541. Interacts with the terminal deoxynucleotidyltransferase DNTT. Interacts with TRERF1. Identified in a histone deacetylase complex that contains DNTTIP1, HDAC1 and MIDEAS; this complex assembles into a tetramer that contains four copies of each protein chain. Component of a histone deacetylase complex containing DNTTIP1, ZNF541, HDAC1 and HDAC2. Identified in a complex with KCTD19, HDAC1, HDAC2 and ZNF541.</text>
</comment>
<comment type="subcellular location">
    <subcellularLocation>
        <location evidence="2">Nucleus</location>
    </subcellularLocation>
</comment>
<comment type="domain">
    <text evidence="2">The N-terminal domain mediates dimerization.</text>
</comment>
<comment type="domain">
    <text evidence="2">The C-terminal domain mediates interaction with DNA and nucleosomes. It contains a HTH motif that mediates recognition of the consensus sequence.</text>
</comment>
<sequence length="329" mass="37012">MGATGDVEQPRGPGGAERGGPELGDAGAAGQLVLTNPWNIMIKHRQVQRRGRRSQMTTSFTDPAISMDLLRAVLQPSINEEIQTVFNKYMKFFQKAALNVRDNVGEEVDAEQLIQEACRSCLEQAKLLFSDGEKVIPRLTHELPGIKRGRQAEEECALRGSPIPKKRKGRPPGHILANDRAATGMVWKPKSCEPIRREGPKWDPARLNESTTFVLGSRANKALGMGGTRGRIYIKHPHLFKYAADPQDKHWLAEQHHMRATGGKMAYLLIEEDIRDLAASDDYRGCLDLKLEELKSFVLPSWMVEKMRKYMETLRTENEHRAVEAPPQT</sequence>
<accession>A6H7A8</accession>
<reference key="1">
    <citation type="submission" date="2007-06" db="EMBL/GenBank/DDBJ databases">
        <authorList>
            <consortium name="NIH - Mammalian Gene Collection (MGC) project"/>
        </authorList>
    </citation>
    <scope>NUCLEOTIDE SEQUENCE [LARGE SCALE MRNA]</scope>
    <source>
        <strain>Hereford</strain>
        <tissue>Ascending colon</tissue>
    </source>
</reference>
<keyword id="KW-0238">DNA-binding</keyword>
<keyword id="KW-0539">Nucleus</keyword>
<keyword id="KW-0597">Phosphoprotein</keyword>
<keyword id="KW-1185">Reference proteome</keyword>
<keyword id="KW-0804">Transcription</keyword>
<keyword id="KW-0805">Transcription regulation</keyword>
<feature type="chain" id="PRO_0000326136" description="Deoxynucleotidyltransferase terminal-interacting protein 1">
    <location>
        <begin position="1"/>
        <end position="329"/>
    </location>
</feature>
<feature type="DNA-binding region" description="A.T hook" evidence="5">
    <location>
        <begin position="159"/>
        <end position="173"/>
    </location>
</feature>
<feature type="DNA-binding region" description="H-T-H motif" evidence="5">
    <location>
        <begin position="216"/>
        <end position="237"/>
    </location>
</feature>
<feature type="region of interest" description="Disordered" evidence="4">
    <location>
        <begin position="1"/>
        <end position="27"/>
    </location>
</feature>
<feature type="region of interest" description="Important for dimerization" evidence="2">
    <location>
        <begin position="56"/>
        <end position="147"/>
    </location>
</feature>
<feature type="region of interest" description="Important for DNA and nucleosome binding" evidence="2">
    <location>
        <begin position="197"/>
        <end position="316"/>
    </location>
</feature>
<feature type="short sequence motif" description="Nuclear localization signal" evidence="3">
    <location>
        <begin position="164"/>
        <end position="170"/>
    </location>
</feature>
<feature type="compositionally biased region" description="Gly residues" evidence="4">
    <location>
        <begin position="12"/>
        <end position="22"/>
    </location>
</feature>
<feature type="modified residue" description="Phosphoserine" evidence="2">
    <location>
        <position position="161"/>
    </location>
</feature>
<evidence type="ECO:0000250" key="1">
    <source>
        <dbReference type="UniProtKB" id="Q99LB0"/>
    </source>
</evidence>
<evidence type="ECO:0000250" key="2">
    <source>
        <dbReference type="UniProtKB" id="Q9H147"/>
    </source>
</evidence>
<evidence type="ECO:0000255" key="3"/>
<evidence type="ECO:0000256" key="4">
    <source>
        <dbReference type="SAM" id="MobiDB-lite"/>
    </source>
</evidence>
<evidence type="ECO:0000305" key="5"/>
<protein>
    <recommendedName>
        <fullName>Deoxynucleotidyltransferase terminal-interacting protein 1</fullName>
    </recommendedName>
    <alternativeName>
        <fullName>Terminal deoxynucleotidyltransferase-interacting factor 1</fullName>
        <shortName>TdIF1</shortName>
        <shortName>TdT-interacting factor 1</shortName>
    </alternativeName>
</protein>
<dbReference type="EMBL" id="BC146175">
    <property type="protein sequence ID" value="AAI46176.1"/>
    <property type="molecule type" value="mRNA"/>
</dbReference>
<dbReference type="RefSeq" id="NP_001092346.1">
    <property type="nucleotide sequence ID" value="NM_001098876.1"/>
</dbReference>
<dbReference type="BMRB" id="A6H7A8"/>
<dbReference type="SMR" id="A6H7A8"/>
<dbReference type="FunCoup" id="A6H7A8">
    <property type="interactions" value="3108"/>
</dbReference>
<dbReference type="STRING" id="9913.ENSBTAP00000022261"/>
<dbReference type="PaxDb" id="9913-ENSBTAP00000022261"/>
<dbReference type="GeneID" id="505524"/>
<dbReference type="KEGG" id="bta:505524"/>
<dbReference type="CTD" id="116092"/>
<dbReference type="VEuPathDB" id="HostDB:ENSBTAG00000016743"/>
<dbReference type="eggNOG" id="KOG4801">
    <property type="taxonomic scope" value="Eukaryota"/>
</dbReference>
<dbReference type="HOGENOM" id="CLU_073342_0_0_1"/>
<dbReference type="InParanoid" id="A6H7A8"/>
<dbReference type="OMA" id="LAENHHM"/>
<dbReference type="OrthoDB" id="5860246at2759"/>
<dbReference type="TreeFam" id="TF329275"/>
<dbReference type="Proteomes" id="UP000009136">
    <property type="component" value="Chromosome 13"/>
</dbReference>
<dbReference type="Bgee" id="ENSBTAG00000016743">
    <property type="expression patterns" value="Expressed in retina and 106 other cell types or tissues"/>
</dbReference>
<dbReference type="GO" id="GO:0000118">
    <property type="term" value="C:histone deacetylase complex"/>
    <property type="evidence" value="ECO:0000250"/>
    <property type="project" value="UniProtKB"/>
</dbReference>
<dbReference type="GO" id="GO:0005634">
    <property type="term" value="C:nucleus"/>
    <property type="evidence" value="ECO:0000250"/>
    <property type="project" value="UniProtKB"/>
</dbReference>
<dbReference type="GO" id="GO:0003677">
    <property type="term" value="F:DNA binding"/>
    <property type="evidence" value="ECO:0000250"/>
    <property type="project" value="UniProtKB"/>
</dbReference>
<dbReference type="GO" id="GO:0031491">
    <property type="term" value="F:nucleosome binding"/>
    <property type="evidence" value="ECO:0000250"/>
    <property type="project" value="UniProtKB"/>
</dbReference>
<dbReference type="InterPro" id="IPR041384">
    <property type="entry name" value="DNTTIP1_dimer"/>
</dbReference>
<dbReference type="InterPro" id="IPR026064">
    <property type="entry name" value="TdIF1"/>
</dbReference>
<dbReference type="InterPro" id="IPR049121">
    <property type="entry name" value="TdIF1_C"/>
</dbReference>
<dbReference type="PANTHER" id="PTHR23399">
    <property type="entry name" value="DEOXYNUCLEOTIDYLTRANSFERASE TERMINAL-INTERACTING PROTEIN 1"/>
    <property type="match status" value="1"/>
</dbReference>
<dbReference type="PANTHER" id="PTHR23399:SF2">
    <property type="entry name" value="DEOXYNUCLEOTIDYLTRANSFERASE TERMINAL-INTERACTING PROTEIN 1"/>
    <property type="match status" value="1"/>
</dbReference>
<dbReference type="Pfam" id="PF18192">
    <property type="entry name" value="DNTTIP1_dimer"/>
    <property type="match status" value="1"/>
</dbReference>
<dbReference type="Pfam" id="PF21229">
    <property type="entry name" value="TdIF1_2nd"/>
    <property type="match status" value="1"/>
</dbReference>
<name>TDIF1_BOVIN</name>
<proteinExistence type="evidence at transcript level"/>
<organism>
    <name type="scientific">Bos taurus</name>
    <name type="common">Bovine</name>
    <dbReference type="NCBI Taxonomy" id="9913"/>
    <lineage>
        <taxon>Eukaryota</taxon>
        <taxon>Metazoa</taxon>
        <taxon>Chordata</taxon>
        <taxon>Craniata</taxon>
        <taxon>Vertebrata</taxon>
        <taxon>Euteleostomi</taxon>
        <taxon>Mammalia</taxon>
        <taxon>Eutheria</taxon>
        <taxon>Laurasiatheria</taxon>
        <taxon>Artiodactyla</taxon>
        <taxon>Ruminantia</taxon>
        <taxon>Pecora</taxon>
        <taxon>Bovidae</taxon>
        <taxon>Bovinae</taxon>
        <taxon>Bos</taxon>
    </lineage>
</organism>
<gene>
    <name type="primary">DNTTIP1</name>
    <name type="synonym">TDIF1</name>
</gene>